<evidence type="ECO:0000250" key="1">
    <source>
        <dbReference type="UniProtKB" id="Q53I77"/>
    </source>
</evidence>
<evidence type="ECO:0000255" key="2">
    <source>
        <dbReference type="PROSITE-ProRule" id="PRU00115"/>
    </source>
</evidence>
<evidence type="ECO:0000305" key="3"/>
<comment type="function">
    <text evidence="1">Mediates the nuclear export of actin and profilin-actin complexes in somatic cells.</text>
</comment>
<comment type="subcellular location">
    <subcellularLocation>
        <location evidence="1">Nucleus</location>
    </subcellularLocation>
    <subcellularLocation>
        <location evidence="1">Cytoplasm</location>
    </subcellularLocation>
    <text evidence="1">Shuttles between the nucleus and the cytoplasm.</text>
</comment>
<comment type="similarity">
    <text evidence="3">Belongs to the exportin family.</text>
</comment>
<gene>
    <name type="primary">xpo6</name>
</gene>
<keyword id="KW-0963">Cytoplasm</keyword>
<keyword id="KW-0539">Nucleus</keyword>
<keyword id="KW-0653">Protein transport</keyword>
<keyword id="KW-1185">Reference proteome</keyword>
<keyword id="KW-0813">Transport</keyword>
<name>XPO6_DANRE</name>
<reference key="1">
    <citation type="journal article" date="2003" name="EMBO J.">
        <title>Exportin 6: a novel nuclear export receptor that is specific for profilin.actin complexes.</title>
        <authorList>
            <person name="Stueven T."/>
            <person name="Hartmann E."/>
            <person name="Goerlich D."/>
        </authorList>
    </citation>
    <scope>NUCLEOTIDE SEQUENCE [MRNA]</scope>
</reference>
<dbReference type="EMBL" id="AF395741">
    <property type="protein sequence ID" value="AAL78259.1"/>
    <property type="molecule type" value="mRNA"/>
</dbReference>
<dbReference type="RefSeq" id="NP_919355.1">
    <property type="nucleotide sequence ID" value="NM_194374.1"/>
</dbReference>
<dbReference type="SMR" id="Q8QHJ8"/>
<dbReference type="FunCoup" id="Q8QHJ8">
    <property type="interactions" value="2571"/>
</dbReference>
<dbReference type="STRING" id="7955.ENSDARP00000115069"/>
<dbReference type="PaxDb" id="7955-ENSDARP00000099636"/>
<dbReference type="GeneID" id="333980"/>
<dbReference type="KEGG" id="dre:333980"/>
<dbReference type="AGR" id="ZFIN:ZDB-GENE-030131-5912"/>
<dbReference type="CTD" id="23214"/>
<dbReference type="ZFIN" id="ZDB-GENE-030131-5912">
    <property type="gene designation" value="xpo6"/>
</dbReference>
<dbReference type="eggNOG" id="KOG2020">
    <property type="taxonomic scope" value="Eukaryota"/>
</dbReference>
<dbReference type="InParanoid" id="Q8QHJ8"/>
<dbReference type="OrthoDB" id="10261013at2759"/>
<dbReference type="PhylomeDB" id="Q8QHJ8"/>
<dbReference type="PRO" id="PR:Q8QHJ8"/>
<dbReference type="Proteomes" id="UP000000437">
    <property type="component" value="Alternate scaffold 3"/>
</dbReference>
<dbReference type="Proteomes" id="UP000000437">
    <property type="component" value="Chromosome 3"/>
</dbReference>
<dbReference type="GO" id="GO:0005737">
    <property type="term" value="C:cytoplasm"/>
    <property type="evidence" value="ECO:0007669"/>
    <property type="project" value="UniProtKB-SubCell"/>
</dbReference>
<dbReference type="GO" id="GO:0005634">
    <property type="term" value="C:nucleus"/>
    <property type="evidence" value="ECO:0007669"/>
    <property type="project" value="UniProtKB-SubCell"/>
</dbReference>
<dbReference type="GO" id="GO:0005049">
    <property type="term" value="F:nuclear export signal receptor activity"/>
    <property type="evidence" value="ECO:0007669"/>
    <property type="project" value="InterPro"/>
</dbReference>
<dbReference type="GO" id="GO:0031267">
    <property type="term" value="F:small GTPase binding"/>
    <property type="evidence" value="ECO:0007669"/>
    <property type="project" value="InterPro"/>
</dbReference>
<dbReference type="GO" id="GO:0006611">
    <property type="term" value="P:protein export from nucleus"/>
    <property type="evidence" value="ECO:0000250"/>
    <property type="project" value="UniProtKB"/>
</dbReference>
<dbReference type="FunFam" id="1.25.10.10:FF:000147">
    <property type="entry name" value="exportin-6 isoform X2"/>
    <property type="match status" value="1"/>
</dbReference>
<dbReference type="Gene3D" id="1.25.10.10">
    <property type="entry name" value="Leucine-rich Repeat Variant"/>
    <property type="match status" value="1"/>
</dbReference>
<dbReference type="InterPro" id="IPR011989">
    <property type="entry name" value="ARM-like"/>
</dbReference>
<dbReference type="InterPro" id="IPR016024">
    <property type="entry name" value="ARM-type_fold"/>
</dbReference>
<dbReference type="InterPro" id="IPR013598">
    <property type="entry name" value="Exportin-1/Importin-b-like"/>
</dbReference>
<dbReference type="InterPro" id="IPR001494">
    <property type="entry name" value="Importin-beta_N"/>
</dbReference>
<dbReference type="InterPro" id="IPR040016">
    <property type="entry name" value="XPO6"/>
</dbReference>
<dbReference type="PANTHER" id="PTHR21452">
    <property type="entry name" value="EXPORTIN-6"/>
    <property type="match status" value="1"/>
</dbReference>
<dbReference type="PANTHER" id="PTHR21452:SF4">
    <property type="entry name" value="EXPORTIN-6"/>
    <property type="match status" value="1"/>
</dbReference>
<dbReference type="Pfam" id="PF03810">
    <property type="entry name" value="IBN_N"/>
    <property type="match status" value="1"/>
</dbReference>
<dbReference type="Pfam" id="PF08389">
    <property type="entry name" value="Xpo1"/>
    <property type="match status" value="1"/>
</dbReference>
<dbReference type="SMART" id="SM00913">
    <property type="entry name" value="IBN_N"/>
    <property type="match status" value="1"/>
</dbReference>
<dbReference type="SUPFAM" id="SSF48371">
    <property type="entry name" value="ARM repeat"/>
    <property type="match status" value="1"/>
</dbReference>
<dbReference type="PROSITE" id="PS50166">
    <property type="entry name" value="IMPORTIN_B_NT"/>
    <property type="match status" value="1"/>
</dbReference>
<feature type="chain" id="PRO_0000239785" description="Exportin-6">
    <location>
        <begin position="1"/>
        <end position="1128"/>
    </location>
</feature>
<feature type="domain" description="Importin N-terminal" evidence="2">
    <location>
        <begin position="31"/>
        <end position="97"/>
    </location>
</feature>
<organism>
    <name type="scientific">Danio rerio</name>
    <name type="common">Zebrafish</name>
    <name type="synonym">Brachydanio rerio</name>
    <dbReference type="NCBI Taxonomy" id="7955"/>
    <lineage>
        <taxon>Eukaryota</taxon>
        <taxon>Metazoa</taxon>
        <taxon>Chordata</taxon>
        <taxon>Craniata</taxon>
        <taxon>Vertebrata</taxon>
        <taxon>Euteleostomi</taxon>
        <taxon>Actinopterygii</taxon>
        <taxon>Neopterygii</taxon>
        <taxon>Teleostei</taxon>
        <taxon>Ostariophysi</taxon>
        <taxon>Cypriniformes</taxon>
        <taxon>Danionidae</taxon>
        <taxon>Danioninae</taxon>
        <taxon>Danio</taxon>
    </lineage>
</organism>
<sequence>MASEEASLRALESLMTEFFHSCTTNDRKREIEELLNSFAGQPGSWRHWLYFLSNSRNEYVMMYSLTVFENLVNKMWVGVASEDKAELRSCLPKLLLSQHALLPFFIRNKLCKVIVDIGRQDWPMFYHDFFSNTLQLVQSPSLASLGLVLLKMTSEELVCPREDLSVARKDELKKLLLDQIPTVLNLLTRILETVWDKHSVTVTTPPPSPTSRESGVMLGDSTPMVLDAESGALCLLALECLAHLFSWIPLSSSITPSLLASIFHFARFGCQQPIKTKPLPTSNGDSAPGSLPANGGGHCRTGQIVGHAERARLGVMAMNCINELMCKNCVPVDFEEFLLRMFQQTFYLLQRLTNTHSHTNTHTIKSRLQDLDESYVEKFTDFLRLFVSVHLRRIESNAQFPLVEFLALLFKYTFNQPSHEGYLACLDIWSVFLDYLTTKIRSRLADRDSVINRYKDALVLLLREVLNRIQFRLNQSQLEELDDETLDDDQQTEWQRYLRQSLEVVARVMELLPSQTFSVLFPVLQEDLDVYLGLQQFIVRSGTSRRLNITAEADCRKLHCALRDLSSLLQAVGRLAEFFTGDVFTARFNDALAIVQRLVEVSCYGSQISLYDVEMAVPSVLKPDLIDVHAQSLAALQAYSHWLAQFCGEVQRQQDQTQFVDLITSSMAAASPLINGKVPEKLLLSACHLLVSMATTVRPVFLVSLPAVQNIFNLITENHNHRLPQEAHVLVCRALSNMLLLPWPSLPEGEQQWPNRSANHARLISSLTQQYRLLPRPPNHHHTSKAVIQQTLCVLRDLVDSISGEATKSRQICYHSLQESVQVSLALFPLFIQQPEVTDEMLSFFLTLFQALRVQMGVAFTEQIIQTFLSMFTREQLAVGILQEGSSGSKVVQKFLKILQVVVQEPGQTFKPLLPSILSLCLDQVYPIVAERSCPDVRAEMFELLFQILHQNWRFFFKSSVLSSVQRSGAEELMENQAQFTAAMQAFGQSFLQPDIHIFKQNLSYLEVLNTKHKLYHRKLFRNAMLFHFINVLLQVLLHKSHDLLQEDITLALYNMAAVDFSAFYSSFLPEFLNGCQGLDPHQRTTLARNFTPERDLPSFSQGVYRIVNDLRFYRLCNGSLPPGTLKL</sequence>
<proteinExistence type="evidence at transcript level"/>
<protein>
    <recommendedName>
        <fullName>Exportin-6</fullName>
        <shortName>Exp6</shortName>
    </recommendedName>
</protein>
<accession>Q8QHJ8</accession>